<organism>
    <name type="scientific">Verminephrobacter eiseniae (strain EF01-2)</name>
    <dbReference type="NCBI Taxonomy" id="391735"/>
    <lineage>
        <taxon>Bacteria</taxon>
        <taxon>Pseudomonadati</taxon>
        <taxon>Pseudomonadota</taxon>
        <taxon>Betaproteobacteria</taxon>
        <taxon>Burkholderiales</taxon>
        <taxon>Comamonadaceae</taxon>
        <taxon>Verminephrobacter</taxon>
    </lineage>
</organism>
<feature type="chain" id="PRO_1000062366" description="NADPH-dependent 7-cyano-7-deazaguanine reductase">
    <location>
        <begin position="1"/>
        <end position="281"/>
    </location>
</feature>
<feature type="region of interest" description="Disordered" evidence="2">
    <location>
        <begin position="261"/>
        <end position="281"/>
    </location>
</feature>
<feature type="active site" description="Thioimide intermediate" evidence="1">
    <location>
        <position position="188"/>
    </location>
</feature>
<feature type="active site" description="Proton donor" evidence="1">
    <location>
        <position position="195"/>
    </location>
</feature>
<feature type="binding site" evidence="1">
    <location>
        <begin position="81"/>
        <end position="83"/>
    </location>
    <ligand>
        <name>substrate</name>
    </ligand>
</feature>
<feature type="binding site" evidence="1">
    <location>
        <begin position="83"/>
        <end position="84"/>
    </location>
    <ligand>
        <name>NADPH</name>
        <dbReference type="ChEBI" id="CHEBI:57783"/>
    </ligand>
</feature>
<feature type="binding site" evidence="1">
    <location>
        <begin position="227"/>
        <end position="228"/>
    </location>
    <ligand>
        <name>substrate</name>
    </ligand>
</feature>
<feature type="binding site" evidence="1">
    <location>
        <begin position="256"/>
        <end position="257"/>
    </location>
    <ligand>
        <name>NADPH</name>
        <dbReference type="ChEBI" id="CHEBI:57783"/>
    </ligand>
</feature>
<accession>A1WS75</accession>
<reference key="1">
    <citation type="submission" date="2006-12" db="EMBL/GenBank/DDBJ databases">
        <title>Complete sequence of chromosome 1 of Verminephrobacter eiseniae EF01-2.</title>
        <authorList>
            <person name="Copeland A."/>
            <person name="Lucas S."/>
            <person name="Lapidus A."/>
            <person name="Barry K."/>
            <person name="Detter J.C."/>
            <person name="Glavina del Rio T."/>
            <person name="Dalin E."/>
            <person name="Tice H."/>
            <person name="Pitluck S."/>
            <person name="Chertkov O."/>
            <person name="Brettin T."/>
            <person name="Bruce D."/>
            <person name="Han C."/>
            <person name="Tapia R."/>
            <person name="Gilna P."/>
            <person name="Schmutz J."/>
            <person name="Larimer F."/>
            <person name="Land M."/>
            <person name="Hauser L."/>
            <person name="Kyrpides N."/>
            <person name="Kim E."/>
            <person name="Stahl D."/>
            <person name="Richardson P."/>
        </authorList>
    </citation>
    <scope>NUCLEOTIDE SEQUENCE [LARGE SCALE GENOMIC DNA]</scope>
    <source>
        <strain>EF01-2</strain>
    </source>
</reference>
<sequence length="281" mass="31097">MNPPESSPLGKASACVDQYDATLLFPIARADQRAELGISGAAPFFGADLWTAFELSWLNQRGKPQVALAHITVPCETPRIVESKSFKLYLNSFSNTRFADAAQVQARIRADVSAAVWRGAASAGSVGVTLLGPDRFAQELMQELDGLSLDRLDVQCTQYQPAPELLSAQHDAAPVSERLTSQLLKSNCPVTGQPDWASVQIAYRGPPIDQEGLLQYLVSFRNHSGFHEQCVERIFMDLWTRCQPIELTVYARYTRRGGLDINPLRTSHPQGLPRNMRTARQ</sequence>
<gene>
    <name evidence="1" type="primary">queF</name>
    <name type="ordered locus">Veis_4790</name>
</gene>
<dbReference type="EC" id="1.7.1.13" evidence="1"/>
<dbReference type="EMBL" id="CP000542">
    <property type="protein sequence ID" value="ABM60482.1"/>
    <property type="molecule type" value="Genomic_DNA"/>
</dbReference>
<dbReference type="RefSeq" id="WP_011812460.1">
    <property type="nucleotide sequence ID" value="NC_008786.1"/>
</dbReference>
<dbReference type="SMR" id="A1WS75"/>
<dbReference type="STRING" id="391735.Veis_4790"/>
<dbReference type="GeneID" id="76463056"/>
<dbReference type="KEGG" id="vei:Veis_4790"/>
<dbReference type="eggNOG" id="COG0780">
    <property type="taxonomic scope" value="Bacteria"/>
</dbReference>
<dbReference type="eggNOG" id="COG2904">
    <property type="taxonomic scope" value="Bacteria"/>
</dbReference>
<dbReference type="HOGENOM" id="CLU_054738_0_0_4"/>
<dbReference type="OrthoDB" id="9789995at2"/>
<dbReference type="UniPathway" id="UPA00392"/>
<dbReference type="Proteomes" id="UP000000374">
    <property type="component" value="Chromosome"/>
</dbReference>
<dbReference type="GO" id="GO:0005737">
    <property type="term" value="C:cytoplasm"/>
    <property type="evidence" value="ECO:0007669"/>
    <property type="project" value="UniProtKB-SubCell"/>
</dbReference>
<dbReference type="GO" id="GO:0033739">
    <property type="term" value="F:preQ1 synthase activity"/>
    <property type="evidence" value="ECO:0007669"/>
    <property type="project" value="UniProtKB-UniRule"/>
</dbReference>
<dbReference type="GO" id="GO:0008616">
    <property type="term" value="P:queuosine biosynthetic process"/>
    <property type="evidence" value="ECO:0007669"/>
    <property type="project" value="UniProtKB-UniRule"/>
</dbReference>
<dbReference type="GO" id="GO:0006400">
    <property type="term" value="P:tRNA modification"/>
    <property type="evidence" value="ECO:0007669"/>
    <property type="project" value="UniProtKB-UniRule"/>
</dbReference>
<dbReference type="Gene3D" id="3.30.1130.10">
    <property type="match status" value="2"/>
</dbReference>
<dbReference type="HAMAP" id="MF_00817">
    <property type="entry name" value="QueF_type2"/>
    <property type="match status" value="1"/>
</dbReference>
<dbReference type="InterPro" id="IPR043133">
    <property type="entry name" value="GTP-CH-I_C/QueF"/>
</dbReference>
<dbReference type="InterPro" id="IPR050084">
    <property type="entry name" value="NADPH_dep_7-cyano-7-deazaG_red"/>
</dbReference>
<dbReference type="InterPro" id="IPR029500">
    <property type="entry name" value="QueF"/>
</dbReference>
<dbReference type="InterPro" id="IPR029139">
    <property type="entry name" value="QueF_N"/>
</dbReference>
<dbReference type="InterPro" id="IPR016428">
    <property type="entry name" value="QueF_type2"/>
</dbReference>
<dbReference type="NCBIfam" id="TIGR03138">
    <property type="entry name" value="QueF"/>
    <property type="match status" value="1"/>
</dbReference>
<dbReference type="PANTHER" id="PTHR34354">
    <property type="entry name" value="NADPH-DEPENDENT 7-CYANO-7-DEAZAGUANINE REDUCTASE"/>
    <property type="match status" value="1"/>
</dbReference>
<dbReference type="PANTHER" id="PTHR34354:SF1">
    <property type="entry name" value="NADPH-DEPENDENT 7-CYANO-7-DEAZAGUANINE REDUCTASE"/>
    <property type="match status" value="1"/>
</dbReference>
<dbReference type="Pfam" id="PF14489">
    <property type="entry name" value="QueF"/>
    <property type="match status" value="1"/>
</dbReference>
<dbReference type="Pfam" id="PF14819">
    <property type="entry name" value="QueF_N"/>
    <property type="match status" value="1"/>
</dbReference>
<dbReference type="PIRSF" id="PIRSF004750">
    <property type="entry name" value="Nitrile_oxidored_YqcD_prd"/>
    <property type="match status" value="1"/>
</dbReference>
<dbReference type="SUPFAM" id="SSF55620">
    <property type="entry name" value="Tetrahydrobiopterin biosynthesis enzymes-like"/>
    <property type="match status" value="1"/>
</dbReference>
<proteinExistence type="inferred from homology"/>
<keyword id="KW-0963">Cytoplasm</keyword>
<keyword id="KW-0521">NADP</keyword>
<keyword id="KW-0560">Oxidoreductase</keyword>
<keyword id="KW-0671">Queuosine biosynthesis</keyword>
<keyword id="KW-1185">Reference proteome</keyword>
<comment type="function">
    <text evidence="1">Catalyzes the NADPH-dependent reduction of 7-cyano-7-deazaguanine (preQ0) to 7-aminomethyl-7-deazaguanine (preQ1).</text>
</comment>
<comment type="catalytic activity">
    <reaction evidence="1">
        <text>7-aminomethyl-7-carbaguanine + 2 NADP(+) = 7-cyano-7-deazaguanine + 2 NADPH + 3 H(+)</text>
        <dbReference type="Rhea" id="RHEA:13409"/>
        <dbReference type="ChEBI" id="CHEBI:15378"/>
        <dbReference type="ChEBI" id="CHEBI:45075"/>
        <dbReference type="ChEBI" id="CHEBI:57783"/>
        <dbReference type="ChEBI" id="CHEBI:58349"/>
        <dbReference type="ChEBI" id="CHEBI:58703"/>
        <dbReference type="EC" id="1.7.1.13"/>
    </reaction>
</comment>
<comment type="pathway">
    <text evidence="1">tRNA modification; tRNA-queuosine biosynthesis.</text>
</comment>
<comment type="subunit">
    <text evidence="1">Homodimer.</text>
</comment>
<comment type="subcellular location">
    <subcellularLocation>
        <location evidence="1">Cytoplasm</location>
    </subcellularLocation>
</comment>
<comment type="similarity">
    <text evidence="1">Belongs to the GTP cyclohydrolase I family. QueF type 2 subfamily.</text>
</comment>
<name>QUEF_VEREI</name>
<evidence type="ECO:0000255" key="1">
    <source>
        <dbReference type="HAMAP-Rule" id="MF_00817"/>
    </source>
</evidence>
<evidence type="ECO:0000256" key="2">
    <source>
        <dbReference type="SAM" id="MobiDB-lite"/>
    </source>
</evidence>
<protein>
    <recommendedName>
        <fullName evidence="1">NADPH-dependent 7-cyano-7-deazaguanine reductase</fullName>
        <ecNumber evidence="1">1.7.1.13</ecNumber>
    </recommendedName>
    <alternativeName>
        <fullName evidence="1">7-cyano-7-carbaguanine reductase</fullName>
    </alternativeName>
    <alternativeName>
        <fullName evidence="1">NADPH-dependent nitrile oxidoreductase</fullName>
    </alternativeName>
    <alternativeName>
        <fullName evidence="1">PreQ(0) reductase</fullName>
    </alternativeName>
</protein>